<organism>
    <name type="scientific">Panthera tigris altaica</name>
    <name type="common">Siberian tiger</name>
    <dbReference type="NCBI Taxonomy" id="74533"/>
    <lineage>
        <taxon>Eukaryota</taxon>
        <taxon>Metazoa</taxon>
        <taxon>Chordata</taxon>
        <taxon>Craniata</taxon>
        <taxon>Vertebrata</taxon>
        <taxon>Euteleostomi</taxon>
        <taxon>Mammalia</taxon>
        <taxon>Eutheria</taxon>
        <taxon>Laurasiatheria</taxon>
        <taxon>Carnivora</taxon>
        <taxon>Feliformia</taxon>
        <taxon>Felidae</taxon>
        <taxon>Pantherinae</taxon>
        <taxon>Panthera</taxon>
    </lineage>
</organism>
<accession>Q6GUL6</accession>
<feature type="signal peptide" evidence="5">
    <location>
        <begin position="1"/>
        <end status="unknown"/>
    </location>
</feature>
<feature type="propeptide" id="PRO_0000015669" evidence="1">
    <location>
        <begin status="unknown"/>
        <end position="48"/>
    </location>
</feature>
<feature type="chain" id="PRO_0000015670" description="Insulin-like growth factor 1">
    <location>
        <begin position="49"/>
        <end position="118"/>
    </location>
</feature>
<feature type="propeptide" id="PRO_0000015671" description="E peptide">
    <location>
        <begin position="119"/>
        <end position="153"/>
    </location>
</feature>
<feature type="region of interest" description="B">
    <location>
        <begin position="49"/>
        <end position="77"/>
    </location>
</feature>
<feature type="region of interest" description="C">
    <location>
        <begin position="78"/>
        <end position="89"/>
    </location>
</feature>
<feature type="region of interest" description="A">
    <location>
        <begin position="90"/>
        <end position="110"/>
    </location>
</feature>
<feature type="region of interest" description="D">
    <location>
        <begin position="111"/>
        <end position="118"/>
    </location>
</feature>
<feature type="region of interest" description="Disordered" evidence="6">
    <location>
        <begin position="120"/>
        <end position="153"/>
    </location>
</feature>
<feature type="compositionally biased region" description="Basic and acidic residues" evidence="6">
    <location>
        <begin position="125"/>
        <end position="138"/>
    </location>
</feature>
<feature type="compositionally biased region" description="Polar residues" evidence="6">
    <location>
        <begin position="142"/>
        <end position="153"/>
    </location>
</feature>
<feature type="disulfide bond" evidence="3">
    <location>
        <begin position="54"/>
        <end position="96"/>
    </location>
</feature>
<feature type="disulfide bond" evidence="3">
    <location>
        <begin position="66"/>
        <end position="109"/>
    </location>
</feature>
<feature type="disulfide bond" evidence="3">
    <location>
        <begin position="95"/>
        <end position="100"/>
    </location>
</feature>
<proteinExistence type="evidence at transcript level"/>
<evidence type="ECO:0000250" key="1"/>
<evidence type="ECO:0000250" key="2">
    <source>
        <dbReference type="UniProtKB" id="P05017"/>
    </source>
</evidence>
<evidence type="ECO:0000250" key="3">
    <source>
        <dbReference type="UniProtKB" id="P05019"/>
    </source>
</evidence>
<evidence type="ECO:0000250" key="4">
    <source>
        <dbReference type="UniProtKB" id="P08025"/>
    </source>
</evidence>
<evidence type="ECO:0000255" key="5"/>
<evidence type="ECO:0000256" key="6">
    <source>
        <dbReference type="SAM" id="MobiDB-lite"/>
    </source>
</evidence>
<evidence type="ECO:0000303" key="7">
    <source ref="1"/>
</evidence>
<evidence type="ECO:0000305" key="8"/>
<comment type="function">
    <text evidence="2 3 4">The insulin-like growth factors, isolated from plasma, are structurally and functionally related to insulin but have a much higher growth-promoting activity. May be a physiological regulator of [1-14C]-2-deoxy-D-glucose (2DG) transport and glycogen synthesis in osteoblasts. Stimulates glucose transport in bone-derived osteoblastic (PyMS) cells and is effective at much lower concentrations than insulin, not only regarding glycogen and DNA synthesis but also with regard to enhancing glucose uptake. May play a role in synapse maturation. Ca(2+)-dependent exocytosis of IGF1 is required for sensory perception of smell in the olfactory bulb. Acts as a ligand for IGF1R. Binds to the alpha subunit of IGF1R, leading to the activation of the intrinsic tyrosine kinase activity which autophosphorylates tyrosine residues in the beta subunit thus initiating a cascade of down-stream signaling events leading to activation of the PI3K-AKT/PKB and the Ras-MAPK pathways. Binds to integrins ITGAV:ITGB3 and ITGA6:ITGB4. Its binding to integrins and subsequent ternary complex formation with integrins and IGFR1 are essential for IGF1 signaling. Induces the phosphorylation and activation of IGFR1, MAPK3/ERK1, MAPK1/ERK2 and AKT1 (By similarity). As part of the MAPK/ERK signaling pathway, acts as a negative regulator of apoptosis in cardiomyocytes via promotion of STUB1/CHIP-mediated ubiquitination and degradation of ICER-type isoforms of CREM (By similarity).</text>
</comment>
<comment type="subunit">
    <text evidence="3">Forms a ternary complex with IGFR1 and ITGAV:ITGB3. Forms a ternary complex with IGFR1 and ITGA6:ITGB4. Forms a ternary complex with IGFBP3 and ALS.</text>
</comment>
<comment type="subcellular location">
    <subcellularLocation>
        <location evidence="2">Secreted</location>
    </subcellularLocation>
</comment>
<comment type="similarity">
    <text evidence="8">Belongs to the insulin family.</text>
</comment>
<reference key="1">
    <citation type="submission" date="2004-08" db="EMBL/GenBank/DDBJ databases">
        <title>Cloning and expression of Panthera tigris altaica insulin-like growth factor I.</title>
        <authorList>
            <person name="Hu X."/>
            <person name="Song L."/>
            <person name="Zhang Z."/>
            <person name="Zhang A."/>
            <person name="Fan W."/>
            <person name="Zhu M."/>
        </authorList>
    </citation>
    <scope>NUCLEOTIDE SEQUENCE [MRNA]</scope>
    <source>
        <tissue>Liver</tissue>
    </source>
</reference>
<name>IGF1_PANTA</name>
<keyword id="KW-1015">Disulfide bond</keyword>
<keyword id="KW-0339">Growth factor</keyword>
<keyword id="KW-1185">Reference proteome</keyword>
<keyword id="KW-0964">Secreted</keyword>
<keyword id="KW-0732">Signal</keyword>
<protein>
    <recommendedName>
        <fullName evidence="3">Insulin-like growth factor 1</fullName>
    </recommendedName>
    <alternativeName>
        <fullName evidence="7">Insulin-like growth factor I</fullName>
        <shortName evidence="7">IGF-I</shortName>
    </alternativeName>
    <alternativeName>
        <fullName>Somatomedin</fullName>
    </alternativeName>
</protein>
<dbReference type="EMBL" id="AY635911">
    <property type="protein sequence ID" value="AAT48655.2"/>
    <property type="molecule type" value="mRNA"/>
</dbReference>
<dbReference type="RefSeq" id="XP_015394597.1">
    <property type="nucleotide sequence ID" value="XM_015539111.1"/>
</dbReference>
<dbReference type="SMR" id="Q6GUL6"/>
<dbReference type="KEGG" id="ptg:102962543"/>
<dbReference type="Proteomes" id="UP000675900">
    <property type="component" value="Unplaced"/>
</dbReference>
<dbReference type="GO" id="GO:0035867">
    <property type="term" value="C:alphav-beta3 integrin-IGF-1-IGF1R complex"/>
    <property type="evidence" value="ECO:0000250"/>
    <property type="project" value="UniProtKB"/>
</dbReference>
<dbReference type="GO" id="GO:0070382">
    <property type="term" value="C:exocytic vesicle"/>
    <property type="evidence" value="ECO:0000250"/>
    <property type="project" value="UniProtKB"/>
</dbReference>
<dbReference type="GO" id="GO:0005615">
    <property type="term" value="C:extracellular space"/>
    <property type="evidence" value="ECO:0007669"/>
    <property type="project" value="InterPro"/>
</dbReference>
<dbReference type="GO" id="GO:0008083">
    <property type="term" value="F:growth factor activity"/>
    <property type="evidence" value="ECO:0007669"/>
    <property type="project" value="UniProtKB-KW"/>
</dbReference>
<dbReference type="GO" id="GO:0005179">
    <property type="term" value="F:hormone activity"/>
    <property type="evidence" value="ECO:0007669"/>
    <property type="project" value="InterPro"/>
</dbReference>
<dbReference type="GO" id="GO:0005159">
    <property type="term" value="F:insulin-like growth factor receptor binding"/>
    <property type="evidence" value="ECO:0000250"/>
    <property type="project" value="UniProtKB"/>
</dbReference>
<dbReference type="GO" id="GO:0008283">
    <property type="term" value="P:cell population proliferation"/>
    <property type="evidence" value="ECO:0007669"/>
    <property type="project" value="TreeGrafter"/>
</dbReference>
<dbReference type="GO" id="GO:0048009">
    <property type="term" value="P:insulin-like growth factor receptor signaling pathway"/>
    <property type="evidence" value="ECO:0000250"/>
    <property type="project" value="UniProtKB"/>
</dbReference>
<dbReference type="GO" id="GO:0043066">
    <property type="term" value="P:negative regulation of apoptotic process"/>
    <property type="evidence" value="ECO:0000250"/>
    <property type="project" value="UniProtKB"/>
</dbReference>
<dbReference type="GO" id="GO:0090201">
    <property type="term" value="P:negative regulation of release of cytochrome c from mitochondria"/>
    <property type="evidence" value="ECO:0000250"/>
    <property type="project" value="UniProtKB"/>
</dbReference>
<dbReference type="GO" id="GO:0034392">
    <property type="term" value="P:negative regulation of smooth muscle cell apoptotic process"/>
    <property type="evidence" value="ECO:0000250"/>
    <property type="project" value="UniProtKB"/>
</dbReference>
<dbReference type="GO" id="GO:0008284">
    <property type="term" value="P:positive regulation of cell population proliferation"/>
    <property type="evidence" value="ECO:0000250"/>
    <property type="project" value="UniProtKB"/>
</dbReference>
<dbReference type="GO" id="GO:0046326">
    <property type="term" value="P:positive regulation of D-glucose import"/>
    <property type="evidence" value="ECO:0000250"/>
    <property type="project" value="UniProtKB"/>
</dbReference>
<dbReference type="GO" id="GO:0045725">
    <property type="term" value="P:positive regulation of glycogen biosynthetic process"/>
    <property type="evidence" value="ECO:0000250"/>
    <property type="project" value="UniProtKB"/>
</dbReference>
<dbReference type="GO" id="GO:0043410">
    <property type="term" value="P:positive regulation of MAPK cascade"/>
    <property type="evidence" value="ECO:0000250"/>
    <property type="project" value="UniProtKB"/>
</dbReference>
<dbReference type="GO" id="GO:0051897">
    <property type="term" value="P:positive regulation of phosphatidylinositol 3-kinase/protein kinase B signal transduction"/>
    <property type="evidence" value="ECO:0007669"/>
    <property type="project" value="TreeGrafter"/>
</dbReference>
<dbReference type="CDD" id="cd04368">
    <property type="entry name" value="IlGF"/>
    <property type="match status" value="1"/>
</dbReference>
<dbReference type="FunFam" id="1.10.100.10:FF:000001">
    <property type="entry name" value="insulin-like growth factor I isoform X1"/>
    <property type="match status" value="1"/>
</dbReference>
<dbReference type="Gene3D" id="1.10.100.10">
    <property type="entry name" value="Insulin-like"/>
    <property type="match status" value="1"/>
</dbReference>
<dbReference type="InterPro" id="IPR022341">
    <property type="entry name" value="IGF-I"/>
</dbReference>
<dbReference type="InterPro" id="IPR016179">
    <property type="entry name" value="Insulin-like"/>
</dbReference>
<dbReference type="InterPro" id="IPR022350">
    <property type="entry name" value="Insulin-like_growth_factor"/>
</dbReference>
<dbReference type="InterPro" id="IPR036438">
    <property type="entry name" value="Insulin-like_sf"/>
</dbReference>
<dbReference type="InterPro" id="IPR022353">
    <property type="entry name" value="Insulin_CS"/>
</dbReference>
<dbReference type="InterPro" id="IPR022352">
    <property type="entry name" value="Insulin_family"/>
</dbReference>
<dbReference type="PANTHER" id="PTHR46845">
    <property type="entry name" value="INSULIN-LIKE GROWTH FACTOR I"/>
    <property type="match status" value="1"/>
</dbReference>
<dbReference type="PANTHER" id="PTHR46845:SF1">
    <property type="entry name" value="INSULIN-LIKE GROWTH FACTOR I"/>
    <property type="match status" value="1"/>
</dbReference>
<dbReference type="Pfam" id="PF00049">
    <property type="entry name" value="Insulin"/>
    <property type="match status" value="1"/>
</dbReference>
<dbReference type="PRINTS" id="PR02002">
    <property type="entry name" value="INSLNLIKEGF"/>
</dbReference>
<dbReference type="PRINTS" id="PR02005">
    <property type="entry name" value="INSLNLIKEGF1"/>
</dbReference>
<dbReference type="PRINTS" id="PR00276">
    <property type="entry name" value="INSULINFAMLY"/>
</dbReference>
<dbReference type="SMART" id="SM00078">
    <property type="entry name" value="IlGF"/>
    <property type="match status" value="1"/>
</dbReference>
<dbReference type="SUPFAM" id="SSF56994">
    <property type="entry name" value="Insulin-like"/>
    <property type="match status" value="1"/>
</dbReference>
<dbReference type="PROSITE" id="PS00262">
    <property type="entry name" value="INSULIN"/>
    <property type="match status" value="1"/>
</dbReference>
<gene>
    <name evidence="3" type="primary">IGF1</name>
    <name evidence="3" type="synonym">IGF-1</name>
</gene>
<sequence>MGKISSLPTQLFKCCFCDFLKVKMHIMSPSHLFYLGLCLLTFTSSATAGPETLCGAELVDALQFVCGDRGFYFNKPTGYGSSSRRAPQTGIVDECCFRSCDLRRLEMYCAPLKPAKSARSVRAQRHTDMPKAQKEVHLKNASRGSAGNKNYRM</sequence>